<evidence type="ECO:0000255" key="1">
    <source>
        <dbReference type="HAMAP-Rule" id="MF_01345"/>
    </source>
</evidence>
<evidence type="ECO:0000305" key="2"/>
<proteinExistence type="inferred from homology"/>
<dbReference type="EMBL" id="CR555306">
    <property type="protein sequence ID" value="CAI08291.1"/>
    <property type="molecule type" value="Genomic_DNA"/>
</dbReference>
<dbReference type="RefSeq" id="WP_011237981.1">
    <property type="nucleotide sequence ID" value="NC_006513.1"/>
</dbReference>
<dbReference type="SMR" id="Q5P323"/>
<dbReference type="STRING" id="76114.ebC10"/>
<dbReference type="KEGG" id="eba:ebC10"/>
<dbReference type="eggNOG" id="COG0186">
    <property type="taxonomic scope" value="Bacteria"/>
</dbReference>
<dbReference type="HOGENOM" id="CLU_073626_1_1_4"/>
<dbReference type="OrthoDB" id="9811714at2"/>
<dbReference type="Proteomes" id="UP000006552">
    <property type="component" value="Chromosome"/>
</dbReference>
<dbReference type="GO" id="GO:0022627">
    <property type="term" value="C:cytosolic small ribosomal subunit"/>
    <property type="evidence" value="ECO:0007669"/>
    <property type="project" value="TreeGrafter"/>
</dbReference>
<dbReference type="GO" id="GO:0019843">
    <property type="term" value="F:rRNA binding"/>
    <property type="evidence" value="ECO:0007669"/>
    <property type="project" value="UniProtKB-UniRule"/>
</dbReference>
<dbReference type="GO" id="GO:0003735">
    <property type="term" value="F:structural constituent of ribosome"/>
    <property type="evidence" value="ECO:0007669"/>
    <property type="project" value="InterPro"/>
</dbReference>
<dbReference type="GO" id="GO:0006412">
    <property type="term" value="P:translation"/>
    <property type="evidence" value="ECO:0007669"/>
    <property type="project" value="UniProtKB-UniRule"/>
</dbReference>
<dbReference type="CDD" id="cd00364">
    <property type="entry name" value="Ribosomal_uS17"/>
    <property type="match status" value="1"/>
</dbReference>
<dbReference type="Gene3D" id="2.40.50.140">
    <property type="entry name" value="Nucleic acid-binding proteins"/>
    <property type="match status" value="1"/>
</dbReference>
<dbReference type="HAMAP" id="MF_01345_B">
    <property type="entry name" value="Ribosomal_uS17_B"/>
    <property type="match status" value="1"/>
</dbReference>
<dbReference type="InterPro" id="IPR012340">
    <property type="entry name" value="NA-bd_OB-fold"/>
</dbReference>
<dbReference type="InterPro" id="IPR000266">
    <property type="entry name" value="Ribosomal_uS17"/>
</dbReference>
<dbReference type="InterPro" id="IPR019984">
    <property type="entry name" value="Ribosomal_uS17_bact/chlr"/>
</dbReference>
<dbReference type="InterPro" id="IPR019979">
    <property type="entry name" value="Ribosomal_uS17_CS"/>
</dbReference>
<dbReference type="NCBIfam" id="NF004123">
    <property type="entry name" value="PRK05610.1"/>
    <property type="match status" value="1"/>
</dbReference>
<dbReference type="NCBIfam" id="TIGR03635">
    <property type="entry name" value="uS17_bact"/>
    <property type="match status" value="1"/>
</dbReference>
<dbReference type="PANTHER" id="PTHR10744">
    <property type="entry name" value="40S RIBOSOMAL PROTEIN S11 FAMILY MEMBER"/>
    <property type="match status" value="1"/>
</dbReference>
<dbReference type="PANTHER" id="PTHR10744:SF1">
    <property type="entry name" value="SMALL RIBOSOMAL SUBUNIT PROTEIN US17M"/>
    <property type="match status" value="1"/>
</dbReference>
<dbReference type="Pfam" id="PF00366">
    <property type="entry name" value="Ribosomal_S17"/>
    <property type="match status" value="1"/>
</dbReference>
<dbReference type="PRINTS" id="PR00973">
    <property type="entry name" value="RIBOSOMALS17"/>
</dbReference>
<dbReference type="SUPFAM" id="SSF50249">
    <property type="entry name" value="Nucleic acid-binding proteins"/>
    <property type="match status" value="1"/>
</dbReference>
<dbReference type="PROSITE" id="PS00056">
    <property type="entry name" value="RIBOSOMAL_S17"/>
    <property type="match status" value="1"/>
</dbReference>
<feature type="chain" id="PRO_0000233417" description="Small ribosomal subunit protein uS17">
    <location>
        <begin position="1"/>
        <end position="89"/>
    </location>
</feature>
<comment type="function">
    <text evidence="1">One of the primary rRNA binding proteins, it binds specifically to the 5'-end of 16S ribosomal RNA.</text>
</comment>
<comment type="subunit">
    <text evidence="1">Part of the 30S ribosomal subunit.</text>
</comment>
<comment type="similarity">
    <text evidence="1">Belongs to the universal ribosomal protein uS17 family.</text>
</comment>
<accession>Q5P323</accession>
<keyword id="KW-1185">Reference proteome</keyword>
<keyword id="KW-0687">Ribonucleoprotein</keyword>
<keyword id="KW-0689">Ribosomal protein</keyword>
<keyword id="KW-0694">RNA-binding</keyword>
<keyword id="KW-0699">rRNA-binding</keyword>
<reference key="1">
    <citation type="journal article" date="2005" name="Arch. Microbiol.">
        <title>The genome sequence of an anaerobic aromatic-degrading denitrifying bacterium, strain EbN1.</title>
        <authorList>
            <person name="Rabus R."/>
            <person name="Kube M."/>
            <person name="Heider J."/>
            <person name="Beck A."/>
            <person name="Heitmann K."/>
            <person name="Widdel F."/>
            <person name="Reinhardt R."/>
        </authorList>
    </citation>
    <scope>NUCLEOTIDE SEQUENCE [LARGE SCALE GENOMIC DNA]</scope>
    <source>
        <strain>DSM 19018 / LMG 30748 / EbN1</strain>
    </source>
</reference>
<name>RS17_AROAE</name>
<sequence length="89" mass="10069">MTEQIEKVRRALVGRVVSDKMQNTVTVLVERRVKHELYGKVITRSAKYHAHVEDGGAAAGDLVEIEECRPISKTKSWRVAKVLEKARVI</sequence>
<gene>
    <name evidence="1" type="primary">rpsQ</name>
    <name type="ordered locus">AZOSEA21660</name>
    <name type="ORF">ebC10</name>
</gene>
<protein>
    <recommendedName>
        <fullName evidence="1">Small ribosomal subunit protein uS17</fullName>
    </recommendedName>
    <alternativeName>
        <fullName evidence="2">30S ribosomal protein S17</fullName>
    </alternativeName>
</protein>
<organism>
    <name type="scientific">Aromatoleum aromaticum (strain DSM 19018 / LMG 30748 / EbN1)</name>
    <name type="common">Azoarcus sp. (strain EbN1)</name>
    <dbReference type="NCBI Taxonomy" id="76114"/>
    <lineage>
        <taxon>Bacteria</taxon>
        <taxon>Pseudomonadati</taxon>
        <taxon>Pseudomonadota</taxon>
        <taxon>Betaproteobacteria</taxon>
        <taxon>Rhodocyclales</taxon>
        <taxon>Rhodocyclaceae</taxon>
        <taxon>Aromatoleum</taxon>
    </lineage>
</organism>